<comment type="function">
    <text evidence="1">Functions in the N-end rule pathway of protein degradation where it conjugates Leu from its aminoacyl-tRNA to the N-termini of proteins containing an N-terminal aspartate or glutamate.</text>
</comment>
<comment type="catalytic activity">
    <reaction evidence="1">
        <text>N-terminal L-glutamyl-[protein] + L-leucyl-tRNA(Leu) = N-terminal L-leucyl-L-glutamyl-[protein] + tRNA(Leu) + H(+)</text>
        <dbReference type="Rhea" id="RHEA:50412"/>
        <dbReference type="Rhea" id="RHEA-COMP:9613"/>
        <dbReference type="Rhea" id="RHEA-COMP:9622"/>
        <dbReference type="Rhea" id="RHEA-COMP:12664"/>
        <dbReference type="Rhea" id="RHEA-COMP:12668"/>
        <dbReference type="ChEBI" id="CHEBI:15378"/>
        <dbReference type="ChEBI" id="CHEBI:64721"/>
        <dbReference type="ChEBI" id="CHEBI:78442"/>
        <dbReference type="ChEBI" id="CHEBI:78494"/>
        <dbReference type="ChEBI" id="CHEBI:133041"/>
        <dbReference type="EC" id="2.3.2.29"/>
    </reaction>
</comment>
<comment type="catalytic activity">
    <reaction evidence="1">
        <text>N-terminal L-aspartyl-[protein] + L-leucyl-tRNA(Leu) = N-terminal L-leucyl-L-aspartyl-[protein] + tRNA(Leu) + H(+)</text>
        <dbReference type="Rhea" id="RHEA:50420"/>
        <dbReference type="Rhea" id="RHEA-COMP:9613"/>
        <dbReference type="Rhea" id="RHEA-COMP:9622"/>
        <dbReference type="Rhea" id="RHEA-COMP:12669"/>
        <dbReference type="Rhea" id="RHEA-COMP:12674"/>
        <dbReference type="ChEBI" id="CHEBI:15378"/>
        <dbReference type="ChEBI" id="CHEBI:64720"/>
        <dbReference type="ChEBI" id="CHEBI:78442"/>
        <dbReference type="ChEBI" id="CHEBI:78494"/>
        <dbReference type="ChEBI" id="CHEBI:133042"/>
        <dbReference type="EC" id="2.3.2.29"/>
    </reaction>
</comment>
<comment type="subcellular location">
    <subcellularLocation>
        <location evidence="1">Cytoplasm</location>
    </subcellularLocation>
</comment>
<comment type="similarity">
    <text evidence="1">Belongs to the R-transferase family. Bpt subfamily.</text>
</comment>
<dbReference type="EC" id="2.3.2.29" evidence="1"/>
<dbReference type="EMBL" id="CP000908">
    <property type="protein sequence ID" value="ABY32610.1"/>
    <property type="molecule type" value="Genomic_DNA"/>
</dbReference>
<dbReference type="RefSeq" id="WP_012255355.1">
    <property type="nucleotide sequence ID" value="NC_010172.1"/>
</dbReference>
<dbReference type="SMR" id="A9VY56"/>
<dbReference type="KEGG" id="mex:Mext_4241"/>
<dbReference type="eggNOG" id="COG2935">
    <property type="taxonomic scope" value="Bacteria"/>
</dbReference>
<dbReference type="HOGENOM" id="CLU_077607_1_0_5"/>
<dbReference type="BioCyc" id="MEXT419610:MEXT_RS21315-MONOMER"/>
<dbReference type="GO" id="GO:0005737">
    <property type="term" value="C:cytoplasm"/>
    <property type="evidence" value="ECO:0007669"/>
    <property type="project" value="UniProtKB-SubCell"/>
</dbReference>
<dbReference type="GO" id="GO:0004057">
    <property type="term" value="F:arginyl-tRNA--protein transferase activity"/>
    <property type="evidence" value="ECO:0007669"/>
    <property type="project" value="InterPro"/>
</dbReference>
<dbReference type="GO" id="GO:0008914">
    <property type="term" value="F:leucyl-tRNA--protein transferase activity"/>
    <property type="evidence" value="ECO:0007669"/>
    <property type="project" value="UniProtKB-UniRule"/>
</dbReference>
<dbReference type="GO" id="GO:0071596">
    <property type="term" value="P:ubiquitin-dependent protein catabolic process via the N-end rule pathway"/>
    <property type="evidence" value="ECO:0007669"/>
    <property type="project" value="InterPro"/>
</dbReference>
<dbReference type="HAMAP" id="MF_00689">
    <property type="entry name" value="Bpt"/>
    <property type="match status" value="1"/>
</dbReference>
<dbReference type="InterPro" id="IPR016181">
    <property type="entry name" value="Acyl_CoA_acyltransferase"/>
</dbReference>
<dbReference type="InterPro" id="IPR017138">
    <property type="entry name" value="Asp_Glu_LeuTrfase"/>
</dbReference>
<dbReference type="InterPro" id="IPR030700">
    <property type="entry name" value="N-end_Aminoacyl_Trfase"/>
</dbReference>
<dbReference type="InterPro" id="IPR007472">
    <property type="entry name" value="N-end_Aminoacyl_Trfase_C"/>
</dbReference>
<dbReference type="InterPro" id="IPR007471">
    <property type="entry name" value="N-end_Aminoacyl_Trfase_N"/>
</dbReference>
<dbReference type="NCBIfam" id="NF002341">
    <property type="entry name" value="PRK01305.1-1"/>
    <property type="match status" value="1"/>
</dbReference>
<dbReference type="NCBIfam" id="NF002342">
    <property type="entry name" value="PRK01305.1-3"/>
    <property type="match status" value="1"/>
</dbReference>
<dbReference type="NCBIfam" id="NF002343">
    <property type="entry name" value="PRK01305.1-4"/>
    <property type="match status" value="1"/>
</dbReference>
<dbReference type="NCBIfam" id="NF002346">
    <property type="entry name" value="PRK01305.2-3"/>
    <property type="match status" value="1"/>
</dbReference>
<dbReference type="PANTHER" id="PTHR21367">
    <property type="entry name" value="ARGININE-TRNA-PROTEIN TRANSFERASE 1"/>
    <property type="match status" value="1"/>
</dbReference>
<dbReference type="PANTHER" id="PTHR21367:SF1">
    <property type="entry name" value="ARGINYL-TRNA--PROTEIN TRANSFERASE 1"/>
    <property type="match status" value="1"/>
</dbReference>
<dbReference type="Pfam" id="PF04377">
    <property type="entry name" value="ATE_C"/>
    <property type="match status" value="1"/>
</dbReference>
<dbReference type="Pfam" id="PF04376">
    <property type="entry name" value="ATE_N"/>
    <property type="match status" value="1"/>
</dbReference>
<dbReference type="PIRSF" id="PIRSF037208">
    <property type="entry name" value="ATE_pro_prd"/>
    <property type="match status" value="1"/>
</dbReference>
<dbReference type="SUPFAM" id="SSF55729">
    <property type="entry name" value="Acyl-CoA N-acyltransferases (Nat)"/>
    <property type="match status" value="1"/>
</dbReference>
<proteinExistence type="inferred from homology"/>
<evidence type="ECO:0000255" key="1">
    <source>
        <dbReference type="HAMAP-Rule" id="MF_00689"/>
    </source>
</evidence>
<organism>
    <name type="scientific">Methylorubrum extorquens (strain PA1)</name>
    <name type="common">Methylobacterium extorquens</name>
    <dbReference type="NCBI Taxonomy" id="419610"/>
    <lineage>
        <taxon>Bacteria</taxon>
        <taxon>Pseudomonadati</taxon>
        <taxon>Pseudomonadota</taxon>
        <taxon>Alphaproteobacteria</taxon>
        <taxon>Hyphomicrobiales</taxon>
        <taxon>Methylobacteriaceae</taxon>
        <taxon>Methylorubrum</taxon>
    </lineage>
</organism>
<feature type="chain" id="PRO_1000131984" description="Aspartate/glutamate leucyltransferase">
    <location>
        <begin position="1"/>
        <end position="248"/>
    </location>
</feature>
<accession>A9VY56</accession>
<name>BPT_METEP</name>
<keyword id="KW-0012">Acyltransferase</keyword>
<keyword id="KW-0963">Cytoplasm</keyword>
<keyword id="KW-0808">Transferase</keyword>
<gene>
    <name evidence="1" type="primary">bpt</name>
    <name type="ordered locus">Mext_4241</name>
</gene>
<sequence length="248" mass="28104">MTSHPRDTPQFYLTAPSPCPYLPGQEERKVFTHLVGRRARDLNEILTQGGFRRSQTIAYRPACETCRACVSVRVVVEDFAITGSQRRILQRNAELIGTPEPNRPASEQYALFRRYLDARHGDGGMVDMTVLDYAMMIEDSHVDTHLVVYRERGPDSAIHGRGVGAPVAVCLTDVLADGLSMVYSFYDPDEASRSLGTYMILDHIRRARALGLPYLYLGYWVGGSRKMDYKAKFKPQERLMPQGWVRVE</sequence>
<protein>
    <recommendedName>
        <fullName evidence="1">Aspartate/glutamate leucyltransferase</fullName>
        <ecNumber evidence="1">2.3.2.29</ecNumber>
    </recommendedName>
</protein>
<reference key="1">
    <citation type="submission" date="2007-12" db="EMBL/GenBank/DDBJ databases">
        <title>Complete sequence of Methylobacterium extorquens PA1.</title>
        <authorList>
            <consortium name="US DOE Joint Genome Institute"/>
            <person name="Copeland A."/>
            <person name="Lucas S."/>
            <person name="Lapidus A."/>
            <person name="Barry K."/>
            <person name="Glavina del Rio T."/>
            <person name="Dalin E."/>
            <person name="Tice H."/>
            <person name="Pitluck S."/>
            <person name="Saunders E."/>
            <person name="Brettin T."/>
            <person name="Bruce D."/>
            <person name="Detter J.C."/>
            <person name="Han C."/>
            <person name="Schmutz J."/>
            <person name="Larimer F."/>
            <person name="Land M."/>
            <person name="Hauser L."/>
            <person name="Kyrpides N."/>
            <person name="Kim E."/>
            <person name="Marx C."/>
            <person name="Richardson P."/>
        </authorList>
    </citation>
    <scope>NUCLEOTIDE SEQUENCE [LARGE SCALE GENOMIC DNA]</scope>
    <source>
        <strain>PA1</strain>
    </source>
</reference>